<comment type="function">
    <text evidence="4">Component of the Sca1 complex, a regulator of cell motility, chemotaxis and signal relay (PubMed:20493808). The Sca1 complex is recruited to the plasma membrane in a chemoattractant- and F-actin-dependent manner and is enriched at the leading edge of chemotaxing cells where it regulates F-actin dynamics and signal relay by controlling the activation of rasC and the downstream target of rapamycin complex 2 (TORC2)-Akt/protein kinase B (PKB) pathway (PubMed:20493808).</text>
</comment>
<comment type="subunit">
    <text evidence="4">Component of the Sca1 complex composed of at least gefA, gefH, scaA, phr, and the protein phosphatase 2A subunits pppA and pho2B (PubMed:20493808). Interacts directly with gefH (PubMed:20493808).</text>
</comment>
<comment type="subcellular location">
    <subcellularLocation>
        <location evidence="4">Cell membrane</location>
    </subcellularLocation>
    <text evidence="4">The Sca1 complex is recruited to the plasma membrane in a chemoattractant- and F-actin-dependent manner and is enriched at the leading edge of chemotaxing cells (PubMed:20493808). Membrane localization of the Sca1 complex is regulated by scaA phosphorylation by PKB and PKB-related PKBR1 (PubMed:20493808).</text>
</comment>
<comment type="disruption phenotype">
    <text evidence="4">Display directionality defects during chemotaxis and increased motility (PubMed:20493808).</text>
</comment>
<proteinExistence type="evidence at protein level"/>
<protein>
    <recommendedName>
        <fullName evidence="5">Sca1 complex protein phr</fullName>
    </recommendedName>
    <alternativeName>
        <fullName evidence="5">Pleckstrin homology domain-containing protein</fullName>
    </alternativeName>
</protein>
<reference key="1">
    <citation type="journal article" date="2005" name="Nature">
        <title>The genome of the social amoeba Dictyostelium discoideum.</title>
        <authorList>
            <person name="Eichinger L."/>
            <person name="Pachebat J.A."/>
            <person name="Gloeckner G."/>
            <person name="Rajandream M.A."/>
            <person name="Sucgang R."/>
            <person name="Berriman M."/>
            <person name="Song J."/>
            <person name="Olsen R."/>
            <person name="Szafranski K."/>
            <person name="Xu Q."/>
            <person name="Tunggal B."/>
            <person name="Kummerfeld S."/>
            <person name="Madera M."/>
            <person name="Konfortov B.A."/>
            <person name="Rivero F."/>
            <person name="Bankier A.T."/>
            <person name="Lehmann R."/>
            <person name="Hamlin N."/>
            <person name="Davies R."/>
            <person name="Gaudet P."/>
            <person name="Fey P."/>
            <person name="Pilcher K."/>
            <person name="Chen G."/>
            <person name="Saunders D."/>
            <person name="Sodergren E.J."/>
            <person name="Davis P."/>
            <person name="Kerhornou A."/>
            <person name="Nie X."/>
            <person name="Hall N."/>
            <person name="Anjard C."/>
            <person name="Hemphill L."/>
            <person name="Bason N."/>
            <person name="Farbrother P."/>
            <person name="Desany B."/>
            <person name="Just E."/>
            <person name="Morio T."/>
            <person name="Rost R."/>
            <person name="Churcher C.M."/>
            <person name="Cooper J."/>
            <person name="Haydock S."/>
            <person name="van Driessche N."/>
            <person name="Cronin A."/>
            <person name="Goodhead I."/>
            <person name="Muzny D.M."/>
            <person name="Mourier T."/>
            <person name="Pain A."/>
            <person name="Lu M."/>
            <person name="Harper D."/>
            <person name="Lindsay R."/>
            <person name="Hauser H."/>
            <person name="James K.D."/>
            <person name="Quiles M."/>
            <person name="Madan Babu M."/>
            <person name="Saito T."/>
            <person name="Buchrieser C."/>
            <person name="Wardroper A."/>
            <person name="Felder M."/>
            <person name="Thangavelu M."/>
            <person name="Johnson D."/>
            <person name="Knights A."/>
            <person name="Loulseged H."/>
            <person name="Mungall K.L."/>
            <person name="Oliver K."/>
            <person name="Price C."/>
            <person name="Quail M.A."/>
            <person name="Urushihara H."/>
            <person name="Hernandez J."/>
            <person name="Rabbinowitsch E."/>
            <person name="Steffen D."/>
            <person name="Sanders M."/>
            <person name="Ma J."/>
            <person name="Kohara Y."/>
            <person name="Sharp S."/>
            <person name="Simmonds M.N."/>
            <person name="Spiegler S."/>
            <person name="Tivey A."/>
            <person name="Sugano S."/>
            <person name="White B."/>
            <person name="Walker D."/>
            <person name="Woodward J.R."/>
            <person name="Winckler T."/>
            <person name="Tanaka Y."/>
            <person name="Shaulsky G."/>
            <person name="Schleicher M."/>
            <person name="Weinstock G.M."/>
            <person name="Rosenthal A."/>
            <person name="Cox E.C."/>
            <person name="Chisholm R.L."/>
            <person name="Gibbs R.A."/>
            <person name="Loomis W.F."/>
            <person name="Platzer M."/>
            <person name="Kay R.R."/>
            <person name="Williams J.G."/>
            <person name="Dear P.H."/>
            <person name="Noegel A.A."/>
            <person name="Barrell B.G."/>
            <person name="Kuspa A."/>
        </authorList>
    </citation>
    <scope>NUCLEOTIDE SEQUENCE [LARGE SCALE GENOMIC DNA]</scope>
    <source>
        <strain>AX4</strain>
    </source>
</reference>
<reference key="2">
    <citation type="journal article" date="2010" name="Dev. Cell">
        <title>A Ras signaling complex controls the RasC-TORC2 pathway and directed cell migration.</title>
        <authorList>
            <person name="Charest P.G."/>
            <person name="Shen Z."/>
            <person name="Lakoduk A."/>
            <person name="Sasaki A.T."/>
            <person name="Briggs S.P."/>
            <person name="Firtel R.A."/>
        </authorList>
    </citation>
    <scope>IDENTIFICATION IN THE SCA1 COMPLEX</scope>
    <scope>INTERACTION WITH GEFH</scope>
    <scope>FUNCTION</scope>
    <scope>DISRUPTION PHENOTYPE</scope>
</reference>
<evidence type="ECO:0000255" key="1"/>
<evidence type="ECO:0000255" key="2">
    <source>
        <dbReference type="PROSITE-ProRule" id="PRU00145"/>
    </source>
</evidence>
<evidence type="ECO:0000256" key="3">
    <source>
        <dbReference type="SAM" id="MobiDB-lite"/>
    </source>
</evidence>
<evidence type="ECO:0000269" key="4">
    <source>
    </source>
</evidence>
<evidence type="ECO:0000303" key="5">
    <source>
    </source>
</evidence>
<feature type="chain" id="PRO_0000438889" description="Sca1 complex protein phr">
    <location>
        <begin position="1"/>
        <end position="1019"/>
    </location>
</feature>
<feature type="domain" description="PH" evidence="2">
    <location>
        <begin position="735"/>
        <end position="836"/>
    </location>
</feature>
<feature type="region of interest" description="Disordered" evidence="3">
    <location>
        <begin position="89"/>
        <end position="118"/>
    </location>
</feature>
<feature type="region of interest" description="Disordered" evidence="3">
    <location>
        <begin position="131"/>
        <end position="202"/>
    </location>
</feature>
<feature type="region of interest" description="Disordered" evidence="3">
    <location>
        <begin position="265"/>
        <end position="287"/>
    </location>
</feature>
<feature type="region of interest" description="Disordered" evidence="3">
    <location>
        <begin position="512"/>
        <end position="546"/>
    </location>
</feature>
<feature type="region of interest" description="Disordered" evidence="3">
    <location>
        <begin position="860"/>
        <end position="890"/>
    </location>
</feature>
<feature type="region of interest" description="Disordered" evidence="3">
    <location>
        <begin position="904"/>
        <end position="951"/>
    </location>
</feature>
<feature type="region of interest" description="Disordered" evidence="3">
    <location>
        <begin position="977"/>
        <end position="1019"/>
    </location>
</feature>
<feature type="coiled-coil region" evidence="1">
    <location>
        <begin position="158"/>
        <end position="188"/>
    </location>
</feature>
<feature type="compositionally biased region" description="Low complexity" evidence="3">
    <location>
        <begin position="93"/>
        <end position="102"/>
    </location>
</feature>
<feature type="compositionally biased region" description="Basic and acidic residues" evidence="3">
    <location>
        <begin position="141"/>
        <end position="155"/>
    </location>
</feature>
<feature type="compositionally biased region" description="Low complexity" evidence="3">
    <location>
        <begin position="158"/>
        <end position="202"/>
    </location>
</feature>
<feature type="compositionally biased region" description="Low complexity" evidence="3">
    <location>
        <begin position="860"/>
        <end position="872"/>
    </location>
</feature>
<feature type="compositionally biased region" description="Polar residues" evidence="3">
    <location>
        <begin position="879"/>
        <end position="890"/>
    </location>
</feature>
<feature type="compositionally biased region" description="Low complexity" evidence="3">
    <location>
        <begin position="977"/>
        <end position="986"/>
    </location>
</feature>
<feature type="compositionally biased region" description="Polar residues" evidence="3">
    <location>
        <begin position="987"/>
        <end position="1019"/>
    </location>
</feature>
<organism>
    <name type="scientific">Dictyostelium discoideum</name>
    <name type="common">Social amoeba</name>
    <dbReference type="NCBI Taxonomy" id="44689"/>
    <lineage>
        <taxon>Eukaryota</taxon>
        <taxon>Amoebozoa</taxon>
        <taxon>Evosea</taxon>
        <taxon>Eumycetozoa</taxon>
        <taxon>Dictyostelia</taxon>
        <taxon>Dictyosteliales</taxon>
        <taxon>Dictyosteliaceae</taxon>
        <taxon>Dictyostelium</taxon>
    </lineage>
</organism>
<keyword id="KW-1003">Cell membrane</keyword>
<keyword id="KW-0175">Coiled coil</keyword>
<keyword id="KW-0342">GTP-binding</keyword>
<keyword id="KW-0472">Membrane</keyword>
<keyword id="KW-0547">Nucleotide-binding</keyword>
<keyword id="KW-1185">Reference proteome</keyword>
<gene>
    <name evidence="5" type="primary">phr</name>
    <name type="ORF">DDB_G0270932</name>
</gene>
<sequence>MLLLNYTQNFQLITFLLFPFINTFDYNCLKPTTTTTTSPTSSKLGFLNRSKSNSNININELKNKFLEQQQEGSISNIAGVATTQQNPSIVINSSSSSSSSSSHHPHHQKTPSNSSSNFNLIKASFNQIGVAFNNNISPRSNRKEKEKDKDKDHQDNSNINNINNINNNINNNINNNNNNNNNNNNNNNMHNPTSSSPSINNNLKGKNVASIIAANGANLNNSLSNLHQHVNNNSNNNLTNSFNSVSHNNISISSGGSALSYNYTQQLNQNGGSNNGSTSNSTSNSANNSLLSLASSINGNIGSDENGSNVMYGGDIASSYHSMSIDPLKSSTNTETIEIMVVGDELSNKARFISSFLNNGIGEDPTLEISTKKSIAIQSGAYNVNINTTVGQEEFWGINDVYYRSSQGFIFVYNVNSRESFLSFLKFRDKIIHEKGTENILMAMVGLTSPLINQESGEESCIREVTQQEAKRMADLYSCSFVELNSFGLDCEHQIQSIVTDLLGRITSGLSSTNNNNSGNNSNNNNGNSNGNSSNNNSNNNSTNNLNNSAILNESIAQSIEVLMLGDIFVGKTQIIQRLLGNPFQNAYKETTEWNRNVYQMTVNDVRYLLKIVDTCGLDIEETLNRERLVSTQGFIFVYSIASRESFLMIEQLRKKLSSIKSETKIPSVLIANKGDSLIRQVTFDEGSKMAQHLGSHYFEVSSMFSDDESIGRPFEQLLIDIQKSGNASGFEPSEIKKKGYLFKEGKKLKSMSKYFFKASRGNLSYCKNESNKSKVKSIQLSEQIQLAIPHNVHEKKDVWPFSIILDPVSKHSINLIASTEEERNAWIKAIKFNCFLEDITSNIIDDVVKSMVSEIASGVAGSGSNNGNNNGHLKRSDTTQQLNNSGSFINGINANKPVPNFSNLSISGGGSSNNSNNSTPMSSPYGSSNNFSSHLSQSTSSMSMSPQQQLQSVLLSSSNLSSSMNSSFSYSSSISSSYTDSMSGSPPDSNGQVFPQSPQLKKTLFQRTTSFSKGSKLK</sequence>
<name>PHR_DICDI</name>
<dbReference type="EMBL" id="AAFI02000005">
    <property type="protein sequence ID" value="EAS66938.1"/>
    <property type="molecule type" value="Genomic_DNA"/>
</dbReference>
<dbReference type="RefSeq" id="XP_001134474.1">
    <property type="nucleotide sequence ID" value="XM_001134474.1"/>
</dbReference>
<dbReference type="FunCoup" id="Q1ZXQ0">
    <property type="interactions" value="35"/>
</dbReference>
<dbReference type="STRING" id="44689.Q1ZXQ0"/>
<dbReference type="PaxDb" id="44689-DDB0233269"/>
<dbReference type="EnsemblProtists" id="EAS66938">
    <property type="protein sequence ID" value="EAS66938"/>
    <property type="gene ID" value="DDB_G0270932"/>
</dbReference>
<dbReference type="GeneID" id="8617180"/>
<dbReference type="KEGG" id="ddi:DDB_G0270932"/>
<dbReference type="dictyBase" id="DDB_G0270932">
    <property type="gene designation" value="phr"/>
</dbReference>
<dbReference type="VEuPathDB" id="AmoebaDB:DDB_G0270932"/>
<dbReference type="eggNOG" id="KOG0395">
    <property type="taxonomic scope" value="Eukaryota"/>
</dbReference>
<dbReference type="HOGENOM" id="CLU_296377_0_0_1"/>
<dbReference type="InParanoid" id="Q1ZXQ0"/>
<dbReference type="OMA" id="QGFIFVY"/>
<dbReference type="PRO" id="PR:Q1ZXQ0"/>
<dbReference type="Proteomes" id="UP000002195">
    <property type="component" value="Chromosome 1"/>
</dbReference>
<dbReference type="GO" id="GO:0005886">
    <property type="term" value="C:plasma membrane"/>
    <property type="evidence" value="ECO:0000318"/>
    <property type="project" value="GO_Central"/>
</dbReference>
<dbReference type="GO" id="GO:1905742">
    <property type="term" value="C:Ras guanyl-nucleotide exchange factor complex"/>
    <property type="evidence" value="ECO:0000314"/>
    <property type="project" value="dictyBase"/>
</dbReference>
<dbReference type="GO" id="GO:0019003">
    <property type="term" value="F:GDP binding"/>
    <property type="evidence" value="ECO:0000318"/>
    <property type="project" value="GO_Central"/>
</dbReference>
<dbReference type="GO" id="GO:0005525">
    <property type="term" value="F:GTP binding"/>
    <property type="evidence" value="ECO:0000318"/>
    <property type="project" value="GO_Central"/>
</dbReference>
<dbReference type="GO" id="GO:0003924">
    <property type="term" value="F:GTPase activity"/>
    <property type="evidence" value="ECO:0000318"/>
    <property type="project" value="GO_Central"/>
</dbReference>
<dbReference type="GO" id="GO:0043327">
    <property type="term" value="P:chemotaxis to cAMP"/>
    <property type="evidence" value="ECO:0000315"/>
    <property type="project" value="dictyBase"/>
</dbReference>
<dbReference type="GO" id="GO:0007165">
    <property type="term" value="P:signal transduction"/>
    <property type="evidence" value="ECO:0007669"/>
    <property type="project" value="InterPro"/>
</dbReference>
<dbReference type="CDD" id="cd00821">
    <property type="entry name" value="PH"/>
    <property type="match status" value="1"/>
</dbReference>
<dbReference type="FunFam" id="2.30.29.30:FF:000945">
    <property type="entry name" value="Sca1 complex protein phr"/>
    <property type="match status" value="1"/>
</dbReference>
<dbReference type="FunFam" id="3.40.50.300:FF:005569">
    <property type="entry name" value="Sca1 complex protein phr"/>
    <property type="match status" value="1"/>
</dbReference>
<dbReference type="FunFam" id="3.40.50.300:FF:005636">
    <property type="entry name" value="Sca1 complex protein phr"/>
    <property type="match status" value="1"/>
</dbReference>
<dbReference type="Gene3D" id="3.40.50.300">
    <property type="entry name" value="P-loop containing nucleotide triphosphate hydrolases"/>
    <property type="match status" value="2"/>
</dbReference>
<dbReference type="Gene3D" id="2.30.29.30">
    <property type="entry name" value="Pleckstrin-homology domain (PH domain)/Phosphotyrosine-binding domain (PTB)"/>
    <property type="match status" value="1"/>
</dbReference>
<dbReference type="InterPro" id="IPR027417">
    <property type="entry name" value="P-loop_NTPase"/>
</dbReference>
<dbReference type="InterPro" id="IPR011993">
    <property type="entry name" value="PH-like_dom_sf"/>
</dbReference>
<dbReference type="InterPro" id="IPR001849">
    <property type="entry name" value="PH_domain"/>
</dbReference>
<dbReference type="InterPro" id="IPR005225">
    <property type="entry name" value="Small_GTP-bd"/>
</dbReference>
<dbReference type="InterPro" id="IPR001806">
    <property type="entry name" value="Small_GTPase"/>
</dbReference>
<dbReference type="InterPro" id="IPR020849">
    <property type="entry name" value="Small_GTPase_Ras-type"/>
</dbReference>
<dbReference type="NCBIfam" id="TIGR00231">
    <property type="entry name" value="small_GTP"/>
    <property type="match status" value="1"/>
</dbReference>
<dbReference type="PANTHER" id="PTHR24070">
    <property type="entry name" value="RAS, DI-RAS, AND RHEB FAMILY MEMBERS OF SMALL GTPASE SUPERFAMILY"/>
    <property type="match status" value="1"/>
</dbReference>
<dbReference type="Pfam" id="PF00169">
    <property type="entry name" value="PH"/>
    <property type="match status" value="1"/>
</dbReference>
<dbReference type="Pfam" id="PF00071">
    <property type="entry name" value="Ras"/>
    <property type="match status" value="2"/>
</dbReference>
<dbReference type="SMART" id="SM00233">
    <property type="entry name" value="PH"/>
    <property type="match status" value="1"/>
</dbReference>
<dbReference type="SMART" id="SM00175">
    <property type="entry name" value="RAB"/>
    <property type="match status" value="1"/>
</dbReference>
<dbReference type="SMART" id="SM00173">
    <property type="entry name" value="RAS"/>
    <property type="match status" value="1"/>
</dbReference>
<dbReference type="SUPFAM" id="SSF52540">
    <property type="entry name" value="P-loop containing nucleoside triphosphate hydrolases"/>
    <property type="match status" value="2"/>
</dbReference>
<dbReference type="SUPFAM" id="SSF50729">
    <property type="entry name" value="PH domain-like"/>
    <property type="match status" value="1"/>
</dbReference>
<dbReference type="PROSITE" id="PS50003">
    <property type="entry name" value="PH_DOMAIN"/>
    <property type="match status" value="1"/>
</dbReference>
<dbReference type="PROSITE" id="PS51419">
    <property type="entry name" value="RAB"/>
    <property type="match status" value="1"/>
</dbReference>
<accession>Q1ZXQ0</accession>